<organism>
    <name type="scientific">Cereibacter sphaeroides (strain ATCC 17023 / DSM 158 / JCM 6121 / CCUG 31486 / LMG 2827 / NBRC 12203 / NCIMB 8253 / ATH 2.4.1.)</name>
    <name type="common">Rhodobacter sphaeroides</name>
    <dbReference type="NCBI Taxonomy" id="272943"/>
    <lineage>
        <taxon>Bacteria</taxon>
        <taxon>Pseudomonadati</taxon>
        <taxon>Pseudomonadota</taxon>
        <taxon>Alphaproteobacteria</taxon>
        <taxon>Rhodobacterales</taxon>
        <taxon>Paracoccaceae</taxon>
        <taxon>Cereibacter</taxon>
    </lineage>
</organism>
<proteinExistence type="inferred from homology"/>
<accession>O33564</accession>
<accession>Q3J483</accession>
<keyword id="KW-0028">Amino-acid biosynthesis</keyword>
<keyword id="KW-0963">Cytoplasm</keyword>
<keyword id="KW-0368">Histidine biosynthesis</keyword>
<keyword id="KW-0456">Lyase</keyword>
<keyword id="KW-1185">Reference proteome</keyword>
<evidence type="ECO:0000255" key="1">
    <source>
        <dbReference type="HAMAP-Rule" id="MF_00076"/>
    </source>
</evidence>
<evidence type="ECO:0000305" key="2"/>
<gene>
    <name evidence="1" type="primary">hisB</name>
    <name type="synonym">hisBD</name>
    <name type="ordered locus">RHOS4_08330</name>
    <name type="ORF">RSP_2246</name>
</gene>
<sequence>MRKAEISRKTAETDISVTVDLDGTGRYDIRTGVGFFDHMMDQLARHALIDITLRCEGDLHIDDHHTVEDCGIALGQALTRALGDKRGIRRYGSFHLAMDDALVRAALDLSGRPFLVWNLPFPTEKIGSFDTELVREFFQALATHGGITLHVDLIHGVNSHHIAEAAFKAVARSLREAVEPDPRRADAIPSTKGML</sequence>
<comment type="catalytic activity">
    <reaction evidence="1">
        <text>D-erythro-1-(imidazol-4-yl)glycerol 3-phosphate = 3-(imidazol-4-yl)-2-oxopropyl phosphate + H2O</text>
        <dbReference type="Rhea" id="RHEA:11040"/>
        <dbReference type="ChEBI" id="CHEBI:15377"/>
        <dbReference type="ChEBI" id="CHEBI:57766"/>
        <dbReference type="ChEBI" id="CHEBI:58278"/>
        <dbReference type="EC" id="4.2.1.19"/>
    </reaction>
</comment>
<comment type="pathway">
    <text evidence="1">Amino-acid biosynthesis; L-histidine biosynthesis; L-histidine from 5-phospho-alpha-D-ribose 1-diphosphate: step 6/9.</text>
</comment>
<comment type="subcellular location">
    <subcellularLocation>
        <location evidence="1">Cytoplasm</location>
    </subcellularLocation>
</comment>
<comment type="similarity">
    <text evidence="1">Belongs to the imidazoleglycerol-phosphate dehydratase family.</text>
</comment>
<dbReference type="EC" id="4.2.1.19" evidence="1"/>
<dbReference type="EMBL" id="X87256">
    <property type="protein sequence ID" value="CAA60712.1"/>
    <property type="molecule type" value="Genomic_DNA"/>
</dbReference>
<dbReference type="EMBL" id="CP000143">
    <property type="protein sequence ID" value="ABA78401.1"/>
    <property type="molecule type" value="Genomic_DNA"/>
</dbReference>
<dbReference type="RefSeq" id="WP_009566359.1">
    <property type="nucleotide sequence ID" value="NZ_CP030271.1"/>
</dbReference>
<dbReference type="RefSeq" id="YP_352302.1">
    <property type="nucleotide sequence ID" value="NC_007493.2"/>
</dbReference>
<dbReference type="SMR" id="O33564"/>
<dbReference type="STRING" id="272943.RSP_2246"/>
<dbReference type="EnsemblBacteria" id="ABA78401">
    <property type="protein sequence ID" value="ABA78401"/>
    <property type="gene ID" value="RSP_2246"/>
</dbReference>
<dbReference type="GeneID" id="67446018"/>
<dbReference type="KEGG" id="rsp:RSP_2246"/>
<dbReference type="PATRIC" id="fig|272943.9.peg.1149"/>
<dbReference type="eggNOG" id="COG0131">
    <property type="taxonomic scope" value="Bacteria"/>
</dbReference>
<dbReference type="OrthoDB" id="9813612at2"/>
<dbReference type="PhylomeDB" id="O33564"/>
<dbReference type="UniPathway" id="UPA00031">
    <property type="reaction ID" value="UER00011"/>
</dbReference>
<dbReference type="Proteomes" id="UP000002703">
    <property type="component" value="Chromosome 1"/>
</dbReference>
<dbReference type="GO" id="GO:0005737">
    <property type="term" value="C:cytoplasm"/>
    <property type="evidence" value="ECO:0007669"/>
    <property type="project" value="UniProtKB-SubCell"/>
</dbReference>
<dbReference type="GO" id="GO:0004424">
    <property type="term" value="F:imidazoleglycerol-phosphate dehydratase activity"/>
    <property type="evidence" value="ECO:0007669"/>
    <property type="project" value="UniProtKB-UniRule"/>
</dbReference>
<dbReference type="GO" id="GO:0000105">
    <property type="term" value="P:L-histidine biosynthetic process"/>
    <property type="evidence" value="ECO:0007669"/>
    <property type="project" value="UniProtKB-UniRule"/>
</dbReference>
<dbReference type="CDD" id="cd07914">
    <property type="entry name" value="IGPD"/>
    <property type="match status" value="1"/>
</dbReference>
<dbReference type="FunFam" id="3.30.230.40:FF:000001">
    <property type="entry name" value="Imidazoleglycerol-phosphate dehydratase HisB"/>
    <property type="match status" value="1"/>
</dbReference>
<dbReference type="FunFam" id="3.30.230.40:FF:000003">
    <property type="entry name" value="Imidazoleglycerol-phosphate dehydratase HisB"/>
    <property type="match status" value="1"/>
</dbReference>
<dbReference type="Gene3D" id="3.30.230.40">
    <property type="entry name" value="Imidazole glycerol phosphate dehydratase, domain 1"/>
    <property type="match status" value="2"/>
</dbReference>
<dbReference type="HAMAP" id="MF_00076">
    <property type="entry name" value="HisB"/>
    <property type="match status" value="1"/>
</dbReference>
<dbReference type="InterPro" id="IPR038494">
    <property type="entry name" value="IGPD_sf"/>
</dbReference>
<dbReference type="InterPro" id="IPR000807">
    <property type="entry name" value="ImidazoleglycerolP_deHydtase"/>
</dbReference>
<dbReference type="InterPro" id="IPR020565">
    <property type="entry name" value="ImidazoleglycerP_deHydtase_CS"/>
</dbReference>
<dbReference type="InterPro" id="IPR020568">
    <property type="entry name" value="Ribosomal_Su5_D2-typ_SF"/>
</dbReference>
<dbReference type="NCBIfam" id="NF002109">
    <property type="entry name" value="PRK00951.1-5"/>
    <property type="match status" value="1"/>
</dbReference>
<dbReference type="NCBIfam" id="NF002111">
    <property type="entry name" value="PRK00951.2-1"/>
    <property type="match status" value="1"/>
</dbReference>
<dbReference type="NCBIfam" id="NF002114">
    <property type="entry name" value="PRK00951.2-4"/>
    <property type="match status" value="1"/>
</dbReference>
<dbReference type="PANTHER" id="PTHR23133:SF2">
    <property type="entry name" value="IMIDAZOLEGLYCEROL-PHOSPHATE DEHYDRATASE"/>
    <property type="match status" value="1"/>
</dbReference>
<dbReference type="PANTHER" id="PTHR23133">
    <property type="entry name" value="IMIDAZOLEGLYCEROL-PHOSPHATE DEHYDRATASE HIS7"/>
    <property type="match status" value="1"/>
</dbReference>
<dbReference type="Pfam" id="PF00475">
    <property type="entry name" value="IGPD"/>
    <property type="match status" value="1"/>
</dbReference>
<dbReference type="SUPFAM" id="SSF54211">
    <property type="entry name" value="Ribosomal protein S5 domain 2-like"/>
    <property type="match status" value="2"/>
</dbReference>
<dbReference type="PROSITE" id="PS00954">
    <property type="entry name" value="IGP_DEHYDRATASE_1"/>
    <property type="match status" value="1"/>
</dbReference>
<dbReference type="PROSITE" id="PS00955">
    <property type="entry name" value="IGP_DEHYDRATASE_2"/>
    <property type="match status" value="1"/>
</dbReference>
<name>HIS7_CERS4</name>
<reference key="1">
    <citation type="submission" date="1997-09" db="EMBL/GenBank/DDBJ databases">
        <authorList>
            <person name="Oriol E."/>
            <person name="Barbe J."/>
            <person name="Gibert I."/>
        </authorList>
    </citation>
    <scope>NUCLEOTIDE SEQUENCE [GENOMIC DNA]</scope>
</reference>
<reference key="2">
    <citation type="submission" date="2005-09" db="EMBL/GenBank/DDBJ databases">
        <title>Complete sequence of chromosome 1 of Rhodobacter sphaeroides 2.4.1.</title>
        <authorList>
            <person name="Copeland A."/>
            <person name="Lucas S."/>
            <person name="Lapidus A."/>
            <person name="Barry K."/>
            <person name="Detter J.C."/>
            <person name="Glavina T."/>
            <person name="Hammon N."/>
            <person name="Israni S."/>
            <person name="Pitluck S."/>
            <person name="Richardson P."/>
            <person name="Mackenzie C."/>
            <person name="Choudhary M."/>
            <person name="Larimer F."/>
            <person name="Hauser L.J."/>
            <person name="Land M."/>
            <person name="Donohue T.J."/>
            <person name="Kaplan S."/>
        </authorList>
    </citation>
    <scope>NUCLEOTIDE SEQUENCE [LARGE SCALE GENOMIC DNA]</scope>
    <source>
        <strain>ATCC 17023 / DSM 158 / JCM 6121 / CCUG 31486 / LMG 2827 / NBRC 12203 / NCIMB 8253 / ATH 2.4.1.</strain>
    </source>
</reference>
<feature type="chain" id="PRO_0000158164" description="Imidazoleglycerol-phosphate dehydratase">
    <location>
        <begin position="1"/>
        <end position="195"/>
    </location>
</feature>
<feature type="sequence conflict" description="In Ref. 1." evidence="2" ref="1">
    <original>LARHALIDIT</original>
    <variation>ARPARADRHP</variation>
    <location>
        <begin position="43"/>
        <end position="52"/>
    </location>
</feature>
<feature type="sequence conflict" description="In Ref. 1; CAA60712." evidence="2" ref="1">
    <original>RG</original>
    <variation>AR</variation>
    <location>
        <begin position="86"/>
        <end position="87"/>
    </location>
</feature>
<protein>
    <recommendedName>
        <fullName evidence="1">Imidazoleglycerol-phosphate dehydratase</fullName>
        <shortName evidence="1">IGPD</shortName>
        <ecNumber evidence="1">4.2.1.19</ecNumber>
    </recommendedName>
</protein>